<feature type="chain" id="PRO_0000334225" description="Na(+)/H(+) antiporter NhaA">
    <location>
        <begin position="1"/>
        <end position="457"/>
    </location>
</feature>
<feature type="transmembrane region" description="Helical" evidence="1">
    <location>
        <begin position="33"/>
        <end position="53"/>
    </location>
</feature>
<feature type="transmembrane region" description="Helical" evidence="1">
    <location>
        <begin position="76"/>
        <end position="96"/>
    </location>
</feature>
<feature type="transmembrane region" description="Helical" evidence="1">
    <location>
        <begin position="114"/>
        <end position="134"/>
    </location>
</feature>
<feature type="transmembrane region" description="Helical" evidence="1">
    <location>
        <begin position="142"/>
        <end position="162"/>
    </location>
</feature>
<feature type="transmembrane region" description="Helical" evidence="1">
    <location>
        <begin position="172"/>
        <end position="192"/>
    </location>
</feature>
<feature type="transmembrane region" description="Helical" evidence="1">
    <location>
        <begin position="196"/>
        <end position="216"/>
    </location>
</feature>
<feature type="transmembrane region" description="Helical" evidence="1">
    <location>
        <begin position="235"/>
        <end position="255"/>
    </location>
</feature>
<feature type="transmembrane region" description="Helical" evidence="1">
    <location>
        <begin position="308"/>
        <end position="328"/>
    </location>
</feature>
<feature type="transmembrane region" description="Helical" evidence="1">
    <location>
        <begin position="349"/>
        <end position="369"/>
    </location>
</feature>
<feature type="transmembrane region" description="Helical" evidence="1">
    <location>
        <begin position="385"/>
        <end position="405"/>
    </location>
</feature>
<feature type="transmembrane region" description="Helical" evidence="1">
    <location>
        <begin position="419"/>
        <end position="439"/>
    </location>
</feature>
<organism>
    <name type="scientific">Anaeromyxobacter sp. (strain Fw109-5)</name>
    <dbReference type="NCBI Taxonomy" id="404589"/>
    <lineage>
        <taxon>Bacteria</taxon>
        <taxon>Pseudomonadati</taxon>
        <taxon>Myxococcota</taxon>
        <taxon>Myxococcia</taxon>
        <taxon>Myxococcales</taxon>
        <taxon>Cystobacterineae</taxon>
        <taxon>Anaeromyxobacteraceae</taxon>
        <taxon>Anaeromyxobacter</taxon>
    </lineage>
</organism>
<gene>
    <name evidence="1" type="primary">nhaA</name>
    <name type="ordered locus">Anae109_3828</name>
</gene>
<name>NHAA_ANADF</name>
<keyword id="KW-0050">Antiport</keyword>
<keyword id="KW-0997">Cell inner membrane</keyword>
<keyword id="KW-1003">Cell membrane</keyword>
<keyword id="KW-0406">Ion transport</keyword>
<keyword id="KW-0472">Membrane</keyword>
<keyword id="KW-1185">Reference proteome</keyword>
<keyword id="KW-0915">Sodium</keyword>
<keyword id="KW-0739">Sodium transport</keyword>
<keyword id="KW-0812">Transmembrane</keyword>
<keyword id="KW-1133">Transmembrane helix</keyword>
<keyword id="KW-0813">Transport</keyword>
<sequence>MGPTRPTPPRTPAVPLFAAVVRPLQAFLRLEAASGIVLLSCAVAALALANSPLSDEYRAFFDTTLGVRVGPLAAEFSLAMLVNDGLMTIFFFVVGMEIKRELAVGELRTLRQALLPLVAALGGMAVPAAIFLAFNAGTPAAAGWGVPMATDIAFCVGVLTLLKARVPHALVVFVTALAIFDDIGGILVIALFYGHGLQLTWLAAAGGLTAALALMSRSYVRSLAAYALVTAALWYALHHGGIHATIAGVIAGLAIPARARVSPRAVLRGVADHTAELLRAAEDEDLDSAAVLELEERIEDVESPLGRFVHALHPWVAFAIMPVFALANSGVDLRALEPAQLVGRLAVGTALALFAGKLVGIFCCTWIAVRSGLAPMPGGASAAKLIGVSAVAGIGFTVALFIAGLAYGGGTQLLDEAKVGILAGSLVSGVVGALVLRLTPRVSSRSPAPELSVASAS</sequence>
<comment type="function">
    <text evidence="1">Na(+)/H(+) antiporter that extrudes sodium in exchange for external protons.</text>
</comment>
<comment type="catalytic activity">
    <reaction evidence="1">
        <text>Na(+)(in) + 2 H(+)(out) = Na(+)(out) + 2 H(+)(in)</text>
        <dbReference type="Rhea" id="RHEA:29251"/>
        <dbReference type="ChEBI" id="CHEBI:15378"/>
        <dbReference type="ChEBI" id="CHEBI:29101"/>
    </reaction>
    <physiologicalReaction direction="left-to-right" evidence="1">
        <dbReference type="Rhea" id="RHEA:29252"/>
    </physiologicalReaction>
</comment>
<comment type="subcellular location">
    <subcellularLocation>
        <location evidence="1">Cell inner membrane</location>
        <topology evidence="1">Multi-pass membrane protein</topology>
    </subcellularLocation>
</comment>
<comment type="similarity">
    <text evidence="1">Belongs to the NhaA Na(+)/H(+) (TC 2.A.33) antiporter family.</text>
</comment>
<dbReference type="EMBL" id="CP000769">
    <property type="protein sequence ID" value="ABS28007.1"/>
    <property type="molecule type" value="Genomic_DNA"/>
</dbReference>
<dbReference type="RefSeq" id="WP_012098638.1">
    <property type="nucleotide sequence ID" value="NC_009675.1"/>
</dbReference>
<dbReference type="SMR" id="A7HH11"/>
<dbReference type="STRING" id="404589.Anae109_3828"/>
<dbReference type="KEGG" id="afw:Anae109_3828"/>
<dbReference type="eggNOG" id="COG3004">
    <property type="taxonomic scope" value="Bacteria"/>
</dbReference>
<dbReference type="HOGENOM" id="CLU_015803_1_2_7"/>
<dbReference type="OrthoDB" id="9808135at2"/>
<dbReference type="Proteomes" id="UP000006382">
    <property type="component" value="Chromosome"/>
</dbReference>
<dbReference type="GO" id="GO:0005886">
    <property type="term" value="C:plasma membrane"/>
    <property type="evidence" value="ECO:0007669"/>
    <property type="project" value="UniProtKB-SubCell"/>
</dbReference>
<dbReference type="GO" id="GO:0015385">
    <property type="term" value="F:sodium:proton antiporter activity"/>
    <property type="evidence" value="ECO:0007669"/>
    <property type="project" value="TreeGrafter"/>
</dbReference>
<dbReference type="GO" id="GO:0006885">
    <property type="term" value="P:regulation of pH"/>
    <property type="evidence" value="ECO:0007669"/>
    <property type="project" value="InterPro"/>
</dbReference>
<dbReference type="Gene3D" id="1.20.1530.10">
    <property type="entry name" value="Na+/H+ antiporter like domain"/>
    <property type="match status" value="1"/>
</dbReference>
<dbReference type="HAMAP" id="MF_01844">
    <property type="entry name" value="NhaA"/>
    <property type="match status" value="1"/>
</dbReference>
<dbReference type="InterPro" id="IPR023171">
    <property type="entry name" value="Na/H_antiporter_dom_sf"/>
</dbReference>
<dbReference type="InterPro" id="IPR004670">
    <property type="entry name" value="NhaA"/>
</dbReference>
<dbReference type="NCBIfam" id="TIGR00773">
    <property type="entry name" value="NhaA"/>
    <property type="match status" value="1"/>
</dbReference>
<dbReference type="PANTHER" id="PTHR30341:SF0">
    <property type="entry name" value="NA(+)_H(+) ANTIPORTER NHAA"/>
    <property type="match status" value="1"/>
</dbReference>
<dbReference type="PANTHER" id="PTHR30341">
    <property type="entry name" value="SODIUM ION/PROTON ANTIPORTER NHAA-RELATED"/>
    <property type="match status" value="1"/>
</dbReference>
<dbReference type="Pfam" id="PF06965">
    <property type="entry name" value="Na_H_antiport_1"/>
    <property type="match status" value="1"/>
</dbReference>
<evidence type="ECO:0000255" key="1">
    <source>
        <dbReference type="HAMAP-Rule" id="MF_01844"/>
    </source>
</evidence>
<accession>A7HH11</accession>
<reference key="1">
    <citation type="journal article" date="2015" name="Genome Announc.">
        <title>Complete genome sequence of Anaeromyxobacter sp. Fw109-5, an anaerobic, metal-reducing bacterium isolated from a contaminated subsurface environment.</title>
        <authorList>
            <person name="Hwang C."/>
            <person name="Copeland A."/>
            <person name="Lucas S."/>
            <person name="Lapidus A."/>
            <person name="Barry K."/>
            <person name="Glavina Del Rio T."/>
            <person name="Dalin E."/>
            <person name="Tice H."/>
            <person name="Pitluck S."/>
            <person name="Sims D."/>
            <person name="Brettin T."/>
            <person name="Bruce D.C."/>
            <person name="Detter J.C."/>
            <person name="Han C.S."/>
            <person name="Schmutz J."/>
            <person name="Larimer F.W."/>
            <person name="Land M.L."/>
            <person name="Hauser L.J."/>
            <person name="Kyrpides N."/>
            <person name="Lykidis A."/>
            <person name="Richardson P."/>
            <person name="Belieav A."/>
            <person name="Sanford R.A."/>
            <person name="Loeffler F.E."/>
            <person name="Fields M.W."/>
        </authorList>
    </citation>
    <scope>NUCLEOTIDE SEQUENCE [LARGE SCALE GENOMIC DNA]</scope>
    <source>
        <strain>Fw109-5</strain>
    </source>
</reference>
<proteinExistence type="inferred from homology"/>
<protein>
    <recommendedName>
        <fullName evidence="1">Na(+)/H(+) antiporter NhaA</fullName>
    </recommendedName>
    <alternativeName>
        <fullName evidence="1">Sodium/proton antiporter NhaA</fullName>
    </alternativeName>
</protein>